<reference key="1">
    <citation type="journal article" date="2002" name="Proc. Natl. Acad. Sci. U.S.A.">
        <title>Complete genome sequence and comparative genomic analysis of an emerging human pathogen, serotype V Streptococcus agalactiae.</title>
        <authorList>
            <person name="Tettelin H."/>
            <person name="Masignani V."/>
            <person name="Cieslewicz M.J."/>
            <person name="Eisen J.A."/>
            <person name="Peterson S.N."/>
            <person name="Wessels M.R."/>
            <person name="Paulsen I.T."/>
            <person name="Nelson K.E."/>
            <person name="Margarit I."/>
            <person name="Read T.D."/>
            <person name="Madoff L.C."/>
            <person name="Wolf A.M."/>
            <person name="Beanan M.J."/>
            <person name="Brinkac L.M."/>
            <person name="Daugherty S.C."/>
            <person name="DeBoy R.T."/>
            <person name="Durkin A.S."/>
            <person name="Kolonay J.F."/>
            <person name="Madupu R."/>
            <person name="Lewis M.R."/>
            <person name="Radune D."/>
            <person name="Fedorova N.B."/>
            <person name="Scanlan D."/>
            <person name="Khouri H.M."/>
            <person name="Mulligan S."/>
            <person name="Carty H.A."/>
            <person name="Cline R.T."/>
            <person name="Van Aken S.E."/>
            <person name="Gill J."/>
            <person name="Scarselli M."/>
            <person name="Mora M."/>
            <person name="Iacobini E.T."/>
            <person name="Brettoni C."/>
            <person name="Galli G."/>
            <person name="Mariani M."/>
            <person name="Vegni F."/>
            <person name="Maione D."/>
            <person name="Rinaudo D."/>
            <person name="Rappuoli R."/>
            <person name="Telford J.L."/>
            <person name="Kasper D.L."/>
            <person name="Grandi G."/>
            <person name="Fraser C.M."/>
        </authorList>
    </citation>
    <scope>NUCLEOTIDE SEQUENCE [LARGE SCALE GENOMIC DNA]</scope>
    <source>
        <strain>ATCC BAA-611 / 2603 V/R</strain>
    </source>
</reference>
<accession>Q8DYA6</accession>
<proteinExistence type="inferred from homology"/>
<gene>
    <name type="ordered locus">SAG1583</name>
</gene>
<feature type="chain" id="PRO_0000074674" description="UPF0298 protein SAG1583">
    <location>
        <begin position="1"/>
        <end position="81"/>
    </location>
</feature>
<organism>
    <name type="scientific">Streptococcus agalactiae serotype V (strain ATCC BAA-611 / 2603 V/R)</name>
    <dbReference type="NCBI Taxonomy" id="208435"/>
    <lineage>
        <taxon>Bacteria</taxon>
        <taxon>Bacillati</taxon>
        <taxon>Bacillota</taxon>
        <taxon>Bacilli</taxon>
        <taxon>Lactobacillales</taxon>
        <taxon>Streptococcaceae</taxon>
        <taxon>Streptococcus</taxon>
    </lineage>
</organism>
<name>Y1583_STRA5</name>
<keyword id="KW-0963">Cytoplasm</keyword>
<keyword id="KW-1185">Reference proteome</keyword>
<dbReference type="EMBL" id="AE009948">
    <property type="protein sequence ID" value="AAN00447.1"/>
    <property type="molecule type" value="Genomic_DNA"/>
</dbReference>
<dbReference type="RefSeq" id="NP_688574.1">
    <property type="nucleotide sequence ID" value="NC_004116.1"/>
</dbReference>
<dbReference type="RefSeq" id="WP_001041186.1">
    <property type="nucleotide sequence ID" value="NC_004116.1"/>
</dbReference>
<dbReference type="SMR" id="Q8DYA6"/>
<dbReference type="STRING" id="208435.SAG1583"/>
<dbReference type="KEGG" id="sag:SAG1583"/>
<dbReference type="PATRIC" id="fig|208435.3.peg.1592"/>
<dbReference type="HOGENOM" id="CLU_159890_1_0_9"/>
<dbReference type="OrthoDB" id="2990788at2"/>
<dbReference type="Proteomes" id="UP000000821">
    <property type="component" value="Chromosome"/>
</dbReference>
<dbReference type="GO" id="GO:0005737">
    <property type="term" value="C:cytoplasm"/>
    <property type="evidence" value="ECO:0007669"/>
    <property type="project" value="UniProtKB-SubCell"/>
</dbReference>
<dbReference type="HAMAP" id="MF_01126">
    <property type="entry name" value="UPF0298"/>
    <property type="match status" value="1"/>
</dbReference>
<dbReference type="InterPro" id="IPR016979">
    <property type="entry name" value="DUF2129"/>
</dbReference>
<dbReference type="NCBIfam" id="NF002631">
    <property type="entry name" value="PRK02302.1"/>
    <property type="match status" value="1"/>
</dbReference>
<dbReference type="Pfam" id="PF09902">
    <property type="entry name" value="DUF2129"/>
    <property type="match status" value="1"/>
</dbReference>
<dbReference type="PIRSF" id="PIRSF031653">
    <property type="entry name" value="UCP031653"/>
    <property type="match status" value="1"/>
</dbReference>
<protein>
    <recommendedName>
        <fullName evidence="1">UPF0298 protein SAG1583</fullName>
    </recommendedName>
</protein>
<comment type="subcellular location">
    <subcellularLocation>
        <location evidence="1">Cytoplasm</location>
    </subcellularLocation>
</comment>
<comment type="similarity">
    <text evidence="1">Belongs to the UPF0298 family.</text>
</comment>
<sequence length="81" mass="9862">MNKQERLGMSVYLYYNRDARKLYKYGDVHYHSRRLRYLVIYVNKEDIVSVSKEIKHLKFVKDVRLSAIDDIDQDFVGNLYR</sequence>
<evidence type="ECO:0000255" key="1">
    <source>
        <dbReference type="HAMAP-Rule" id="MF_01126"/>
    </source>
</evidence>